<dbReference type="EMBL" id="Z49772">
    <property type="protein sequence ID" value="CAA89851.1"/>
    <property type="molecule type" value="mRNA"/>
</dbReference>
<dbReference type="EMBL" id="Z49771">
    <property type="protein sequence ID" value="CAA89849.1"/>
    <property type="status" value="ALT_SEQ"/>
    <property type="molecule type" value="Genomic_DNA"/>
</dbReference>
<dbReference type="PIR" id="S71087">
    <property type="entry name" value="S71087"/>
</dbReference>
<dbReference type="RefSeq" id="YP_009252181.1">
    <property type="nucleotide sequence ID" value="NC_030100.1"/>
</dbReference>
<dbReference type="SMR" id="Q96008"/>
<dbReference type="GeneID" id="27815621"/>
<dbReference type="GO" id="GO:0005739">
    <property type="term" value="C:mitochondrion"/>
    <property type="evidence" value="ECO:0007669"/>
    <property type="project" value="UniProtKB-SubCell"/>
</dbReference>
<dbReference type="GO" id="GO:0015935">
    <property type="term" value="C:small ribosomal subunit"/>
    <property type="evidence" value="ECO:0007669"/>
    <property type="project" value="InterPro"/>
</dbReference>
<dbReference type="GO" id="GO:0003735">
    <property type="term" value="F:structural constituent of ribosome"/>
    <property type="evidence" value="ECO:0007669"/>
    <property type="project" value="InterPro"/>
</dbReference>
<dbReference type="GO" id="GO:0006412">
    <property type="term" value="P:translation"/>
    <property type="evidence" value="ECO:0007669"/>
    <property type="project" value="InterPro"/>
</dbReference>
<dbReference type="CDD" id="cd03368">
    <property type="entry name" value="Ribosomal_S12"/>
    <property type="match status" value="1"/>
</dbReference>
<dbReference type="FunFam" id="2.40.50.140:FF:000099">
    <property type="entry name" value="Ribosomal protein S12, mitochondrial"/>
    <property type="match status" value="1"/>
</dbReference>
<dbReference type="Gene3D" id="2.40.50.140">
    <property type="entry name" value="Nucleic acid-binding proteins"/>
    <property type="match status" value="1"/>
</dbReference>
<dbReference type="HAMAP" id="MF_00403_B">
    <property type="entry name" value="Ribosomal_uS12_B"/>
    <property type="match status" value="1"/>
</dbReference>
<dbReference type="InterPro" id="IPR012340">
    <property type="entry name" value="NA-bd_OB-fold"/>
</dbReference>
<dbReference type="InterPro" id="IPR006032">
    <property type="entry name" value="Ribosomal_uS12"/>
</dbReference>
<dbReference type="InterPro" id="IPR005679">
    <property type="entry name" value="Ribosomal_uS12_bac"/>
</dbReference>
<dbReference type="NCBIfam" id="TIGR00981">
    <property type="entry name" value="rpsL_bact"/>
    <property type="match status" value="1"/>
</dbReference>
<dbReference type="PANTHER" id="PTHR11652">
    <property type="entry name" value="30S RIBOSOMAL PROTEIN S12 FAMILY MEMBER"/>
    <property type="match status" value="1"/>
</dbReference>
<dbReference type="Pfam" id="PF00164">
    <property type="entry name" value="Ribosom_S12_S23"/>
    <property type="match status" value="1"/>
</dbReference>
<dbReference type="PIRSF" id="PIRSF002133">
    <property type="entry name" value="Ribosomal_S12/S23"/>
    <property type="match status" value="1"/>
</dbReference>
<dbReference type="PRINTS" id="PR01034">
    <property type="entry name" value="RIBOSOMALS12"/>
</dbReference>
<dbReference type="SUPFAM" id="SSF50249">
    <property type="entry name" value="Nucleic acid-binding proteins"/>
    <property type="match status" value="1"/>
</dbReference>
<dbReference type="PROSITE" id="PS00055">
    <property type="entry name" value="RIBOSOMAL_S12"/>
    <property type="match status" value="1"/>
</dbReference>
<comment type="function">
    <text>Protein S12 is involved in the translation initiation step.</text>
</comment>
<comment type="subcellular location">
    <subcellularLocation>
        <location>Mitochondrion</location>
    </subcellularLocation>
</comment>
<comment type="RNA editing">
    <location>
        <position position="24" evidence="1"/>
    </location>
    <location>
        <position position="35" evidence="1"/>
    </location>
    <location>
        <position position="66" evidence="1"/>
    </location>
    <location>
        <position position="78" evidence="1"/>
    </location>
    <location>
        <position position="90" evidence="1"/>
    </location>
    <location>
        <position position="95" evidence="1"/>
    </location>
</comment>
<comment type="similarity">
    <text evidence="2">Belongs to the universal ribosomal protein uS12 family.</text>
</comment>
<reference key="1">
    <citation type="journal article" date="1996" name="Mol. Gen. Genet.">
        <title>Conservation of the organization of the mitochondrial nad3 and rps12 genes in evolutionarily distant angiosperms.</title>
        <authorList>
            <person name="Perrotta G."/>
            <person name="Regina T.M.R."/>
            <person name="Ceci L.R."/>
            <person name="Quagliariello C.C."/>
        </authorList>
    </citation>
    <scope>NUCLEOTIDE SEQUENCE [GENOMIC DNA / MRNA]</scope>
    <scope>RNA EDITING</scope>
    <source>
        <tissue>Root</tissue>
        <tissue>Shoot</tissue>
    </source>
</reference>
<organism>
    <name type="scientific">Allium cepa</name>
    <name type="common">Onion</name>
    <dbReference type="NCBI Taxonomy" id="4679"/>
    <lineage>
        <taxon>Eukaryota</taxon>
        <taxon>Viridiplantae</taxon>
        <taxon>Streptophyta</taxon>
        <taxon>Embryophyta</taxon>
        <taxon>Tracheophyta</taxon>
        <taxon>Spermatophyta</taxon>
        <taxon>Magnoliopsida</taxon>
        <taxon>Liliopsida</taxon>
        <taxon>Asparagales</taxon>
        <taxon>Amaryllidaceae</taxon>
        <taxon>Allioideae</taxon>
        <taxon>Allieae</taxon>
        <taxon>Allium</taxon>
    </lineage>
</organism>
<sequence>MPTFNQLIRHGREEKRRTDRTRALDQCPQKQGVCLRVLTITPKKPNSALRKIAKVRLTNRHDIFAYIPGEGHNSQEHSIVLVRGGRVKDLPGVKFHCIRGVKDLLGIPDRRRGRSKYGAEKPKSK</sequence>
<accession>Q96008</accession>
<accession>Q96006</accession>
<keyword id="KW-0496">Mitochondrion</keyword>
<keyword id="KW-0687">Ribonucleoprotein</keyword>
<keyword id="KW-0689">Ribosomal protein</keyword>
<keyword id="KW-0691">RNA editing</keyword>
<feature type="chain" id="PRO_0000146432" description="Small ribosomal subunit protein uS12m">
    <location>
        <begin position="1"/>
        <end position="125"/>
    </location>
</feature>
<name>RT12_ALLCE</name>
<geneLocation type="mitochondrion"/>
<protein>
    <recommendedName>
        <fullName evidence="2">Small ribosomal subunit protein uS12m</fullName>
    </recommendedName>
    <alternativeName>
        <fullName>Ribosomal protein S12, mitochondrial</fullName>
    </alternativeName>
</protein>
<gene>
    <name type="primary">RPS12</name>
</gene>
<evidence type="ECO:0000269" key="1">
    <source>
    </source>
</evidence>
<evidence type="ECO:0000305" key="2"/>
<proteinExistence type="evidence at transcript level"/>